<proteinExistence type="inferred from homology"/>
<protein>
    <recommendedName>
        <fullName>Cytochrome c</fullName>
    </recommendedName>
</protein>
<accession>P32556</accession>
<accession>Q6CJP8</accession>
<comment type="function">
    <text>Electron carrier protein. The oxidized form of the cytochrome c heme group can accept an electron from the heme group of the cytochrome c1 subunit of cytochrome reductase. Cytochrome c then transfers this electron to the cytochrome oxidase complex, the final protein carrier in the mitochondrial electron-transport chain.</text>
</comment>
<comment type="subcellular location">
    <subcellularLocation>
        <location>Mitochondrion intermembrane space</location>
    </subcellularLocation>
    <text>Loosely associated with the inner membrane.</text>
</comment>
<comment type="PTM">
    <text>Binds 1 heme c group covalently per subunit.</text>
</comment>
<comment type="similarity">
    <text evidence="2">Belongs to the cytochrome c family.</text>
</comment>
<comment type="online information" name="Protein Spotlight">
    <link uri="https://www.proteinspotlight.org/back_issues/076"/>
    <text>Life shuttle - Issue 76 of November 2006</text>
</comment>
<gene>
    <name type="primary">CYCK</name>
    <name type="synonym">CYTC1</name>
    <name type="ordered locus">KLLA0F16929g/KLLA0F16940g</name>
</gene>
<dbReference type="EMBL" id="X60834">
    <property type="protein sequence ID" value="CAA43224.1"/>
    <property type="molecule type" value="Genomic_DNA"/>
</dbReference>
<dbReference type="EMBL" id="X58150">
    <property type="protein sequence ID" value="CAA41156.1"/>
    <property type="molecule type" value="Genomic_DNA"/>
</dbReference>
<dbReference type="EMBL" id="CR382126">
    <property type="protein sequence ID" value="CAG98548.1"/>
    <property type="molecule type" value="Genomic_DNA"/>
</dbReference>
<dbReference type="PIR" id="S29350">
    <property type="entry name" value="S29350"/>
</dbReference>
<dbReference type="RefSeq" id="XP_455841.1">
    <property type="nucleotide sequence ID" value="XM_455841.1"/>
</dbReference>
<dbReference type="SMR" id="P32556"/>
<dbReference type="FunCoup" id="P32556">
    <property type="interactions" value="537"/>
</dbReference>
<dbReference type="STRING" id="284590.P32556"/>
<dbReference type="PaxDb" id="284590-P32556"/>
<dbReference type="KEGG" id="kla:KLLA0_F16929g"/>
<dbReference type="eggNOG" id="KOG3453">
    <property type="taxonomic scope" value="Eukaryota"/>
</dbReference>
<dbReference type="HOGENOM" id="CLU_060944_3_0_1"/>
<dbReference type="InParanoid" id="P32556"/>
<dbReference type="Proteomes" id="UP000000598">
    <property type="component" value="Chromosome F"/>
</dbReference>
<dbReference type="GO" id="GO:0005758">
    <property type="term" value="C:mitochondrial intermembrane space"/>
    <property type="evidence" value="ECO:0007669"/>
    <property type="project" value="UniProtKB-SubCell"/>
</dbReference>
<dbReference type="GO" id="GO:0009055">
    <property type="term" value="F:electron transfer activity"/>
    <property type="evidence" value="ECO:0007669"/>
    <property type="project" value="InterPro"/>
</dbReference>
<dbReference type="GO" id="GO:0020037">
    <property type="term" value="F:heme binding"/>
    <property type="evidence" value="ECO:0007669"/>
    <property type="project" value="InterPro"/>
</dbReference>
<dbReference type="GO" id="GO:0046872">
    <property type="term" value="F:metal ion binding"/>
    <property type="evidence" value="ECO:0007669"/>
    <property type="project" value="UniProtKB-KW"/>
</dbReference>
<dbReference type="FunFam" id="1.10.760.10:FF:000001">
    <property type="entry name" value="Cytochrome c iso-1"/>
    <property type="match status" value="1"/>
</dbReference>
<dbReference type="Gene3D" id="1.10.760.10">
    <property type="entry name" value="Cytochrome c-like domain"/>
    <property type="match status" value="1"/>
</dbReference>
<dbReference type="InterPro" id="IPR009056">
    <property type="entry name" value="Cyt_c-like_dom"/>
</dbReference>
<dbReference type="InterPro" id="IPR036909">
    <property type="entry name" value="Cyt_c-like_dom_sf"/>
</dbReference>
<dbReference type="InterPro" id="IPR002327">
    <property type="entry name" value="Cyt_c_1A/1B"/>
</dbReference>
<dbReference type="PANTHER" id="PTHR11961">
    <property type="entry name" value="CYTOCHROME C"/>
    <property type="match status" value="1"/>
</dbReference>
<dbReference type="Pfam" id="PF00034">
    <property type="entry name" value="Cytochrom_C"/>
    <property type="match status" value="1"/>
</dbReference>
<dbReference type="PRINTS" id="PR00604">
    <property type="entry name" value="CYTCHRMECIAB"/>
</dbReference>
<dbReference type="SUPFAM" id="SSF46626">
    <property type="entry name" value="Cytochrome c"/>
    <property type="match status" value="1"/>
</dbReference>
<dbReference type="PROSITE" id="PS51007">
    <property type="entry name" value="CYTC"/>
    <property type="match status" value="1"/>
</dbReference>
<organism>
    <name type="scientific">Kluyveromyces lactis (strain ATCC 8585 / CBS 2359 / DSM 70799 / NBRC 1267 / NRRL Y-1140 / WM37)</name>
    <name type="common">Yeast</name>
    <name type="synonym">Candida sphaerica</name>
    <dbReference type="NCBI Taxonomy" id="284590"/>
    <lineage>
        <taxon>Eukaryota</taxon>
        <taxon>Fungi</taxon>
        <taxon>Dikarya</taxon>
        <taxon>Ascomycota</taxon>
        <taxon>Saccharomycotina</taxon>
        <taxon>Saccharomycetes</taxon>
        <taxon>Saccharomycetales</taxon>
        <taxon>Saccharomycetaceae</taxon>
        <taxon>Kluyveromyces</taxon>
    </lineage>
</organism>
<evidence type="ECO:0000255" key="1">
    <source>
        <dbReference type="PROSITE-ProRule" id="PRU00433"/>
    </source>
</evidence>
<evidence type="ECO:0000305" key="2"/>
<reference key="1">
    <citation type="journal article" date="1993" name="Yeast">
        <title>Sequence of a cytochrome c gene from Kluyveromyces lactis and its upstream region.</title>
        <authorList>
            <person name="Picos M.A.F."/>
            <person name="Rodriguez Torres A.M."/>
            <person name="Ramil E."/>
            <person name="Cerdan M.E."/>
            <person name="Breunig K.D."/>
            <person name="Hollenberg C.P."/>
            <person name="Zitomer R.S."/>
        </authorList>
    </citation>
    <scope>NUCLEOTIDE SEQUENCE [GENOMIC DNA]</scope>
    <source>
        <strain>ATCC 8585 / CBS 2359 / DSM 70799 / NBRC 1267 / NRRL Y-1140 / WM37</strain>
    </source>
</reference>
<reference key="2">
    <citation type="journal article" date="1991" name="Curr. Genet.">
        <title>Contrasting mutation rates in mitochondrial and nuclear genes of yeasts versus mammals.</title>
        <authorList>
            <person name="Clark-Walker G.D."/>
        </authorList>
    </citation>
    <scope>NUCLEOTIDE SEQUENCE [GENOMIC DNA]</scope>
    <source>
        <strain>ATCC 90735 / K8</strain>
    </source>
</reference>
<reference key="3">
    <citation type="journal article" date="2004" name="Nature">
        <title>Genome evolution in yeasts.</title>
        <authorList>
            <person name="Dujon B."/>
            <person name="Sherman D."/>
            <person name="Fischer G."/>
            <person name="Durrens P."/>
            <person name="Casaregola S."/>
            <person name="Lafontaine I."/>
            <person name="de Montigny J."/>
            <person name="Marck C."/>
            <person name="Neuveglise C."/>
            <person name="Talla E."/>
            <person name="Goffard N."/>
            <person name="Frangeul L."/>
            <person name="Aigle M."/>
            <person name="Anthouard V."/>
            <person name="Babour A."/>
            <person name="Barbe V."/>
            <person name="Barnay S."/>
            <person name="Blanchin S."/>
            <person name="Beckerich J.-M."/>
            <person name="Beyne E."/>
            <person name="Bleykasten C."/>
            <person name="Boisrame A."/>
            <person name="Boyer J."/>
            <person name="Cattolico L."/>
            <person name="Confanioleri F."/>
            <person name="de Daruvar A."/>
            <person name="Despons L."/>
            <person name="Fabre E."/>
            <person name="Fairhead C."/>
            <person name="Ferry-Dumazet H."/>
            <person name="Groppi A."/>
            <person name="Hantraye F."/>
            <person name="Hennequin C."/>
            <person name="Jauniaux N."/>
            <person name="Joyet P."/>
            <person name="Kachouri R."/>
            <person name="Kerrest A."/>
            <person name="Koszul R."/>
            <person name="Lemaire M."/>
            <person name="Lesur I."/>
            <person name="Ma L."/>
            <person name="Muller H."/>
            <person name="Nicaud J.-M."/>
            <person name="Nikolski M."/>
            <person name="Oztas S."/>
            <person name="Ozier-Kalogeropoulos O."/>
            <person name="Pellenz S."/>
            <person name="Potier S."/>
            <person name="Richard G.-F."/>
            <person name="Straub M.-L."/>
            <person name="Suleau A."/>
            <person name="Swennen D."/>
            <person name="Tekaia F."/>
            <person name="Wesolowski-Louvel M."/>
            <person name="Westhof E."/>
            <person name="Wirth B."/>
            <person name="Zeniou-Meyer M."/>
            <person name="Zivanovic Y."/>
            <person name="Bolotin-Fukuhara M."/>
            <person name="Thierry A."/>
            <person name="Bouchier C."/>
            <person name="Caudron B."/>
            <person name="Scarpelli C."/>
            <person name="Gaillardin C."/>
            <person name="Weissenbach J."/>
            <person name="Wincker P."/>
            <person name="Souciet J.-L."/>
        </authorList>
    </citation>
    <scope>NUCLEOTIDE SEQUENCE [LARGE SCALE GENOMIC DNA]</scope>
    <source>
        <strain>ATCC 8585 / CBS 2359 / DSM 70799 / NBRC 1267 / NRRL Y-1140 / WM37</strain>
    </source>
</reference>
<feature type="chain" id="PRO_0000108327" description="Cytochrome c">
    <location>
        <begin position="1"/>
        <end position="110"/>
    </location>
</feature>
<feature type="binding site" description="covalent" evidence="1">
    <location>
        <position position="21"/>
    </location>
    <ligand>
        <name>heme c</name>
        <dbReference type="ChEBI" id="CHEBI:61717"/>
    </ligand>
</feature>
<feature type="binding site" description="covalent" evidence="1">
    <location>
        <position position="24"/>
    </location>
    <ligand>
        <name>heme c</name>
        <dbReference type="ChEBI" id="CHEBI:61717"/>
    </ligand>
</feature>
<feature type="binding site" description="axial binding residue" evidence="1">
    <location>
        <position position="25"/>
    </location>
    <ligand>
        <name>heme c</name>
        <dbReference type="ChEBI" id="CHEBI:61717"/>
    </ligand>
    <ligandPart>
        <name>Fe</name>
        <dbReference type="ChEBI" id="CHEBI:18248"/>
    </ligandPart>
</feature>
<feature type="binding site" description="axial binding residue" evidence="1">
    <location>
        <position position="87"/>
    </location>
    <ligand>
        <name>heme c</name>
        <dbReference type="ChEBI" id="CHEBI:61717"/>
    </ligand>
    <ligandPart>
        <name>Fe</name>
        <dbReference type="ChEBI" id="CHEBI:18248"/>
    </ligandPart>
</feature>
<keyword id="KW-0249">Electron transport</keyword>
<keyword id="KW-0349">Heme</keyword>
<keyword id="KW-0408">Iron</keyword>
<keyword id="KW-0479">Metal-binding</keyword>
<keyword id="KW-0496">Mitochondrion</keyword>
<keyword id="KW-1185">Reference proteome</keyword>
<keyword id="KW-0679">Respiratory chain</keyword>
<keyword id="KW-0813">Transport</keyword>
<sequence>MPAPYKKGSEKKGATLFKTRCLQCHTVEAGGPHKVGPNLHGVFGRHSGKASGYSYTDANIKKNVLWDEQTMSDYLENPKKYIPGTKMAFGGLKKEKDRNDIVTYMLKACK</sequence>
<name>CYC_KLULA</name>